<name>FK109_ARATH</name>
<protein>
    <recommendedName>
        <fullName>Putative F-box/kelch-repeat protein At5g03000</fullName>
    </recommendedName>
</protein>
<sequence>MFCSCLEIVFFLAGRHHSQFPSLPDENETNKSSDSPPTVFSSLPDELILNCLARVSRFYRPSLSLVNKEFQSLIASPDLEATRSRIGVTENHLYVCLESNKNNPNPRWFTLAPIPKEQKVKPIIPSFPYQHPTSSTFVSIGSEIYIIGGFVKRKRSRRVLVLDCRSHQCRRLPNMALPRVSAAADVIDGKIYVVGGSKSKNIDNWGEVFDPETQTWEPIFPTTVDLTTQKSVFPGKLVMGGKVYDMDGLKVNLNLNSCVVEIDNMMCQISVCKGILVWYDSEEDLVWNKSMVFDRLGLDWTKEGKTEIWCAEISLERRGFGELWGFVEWSKKVFTYDGCDSPSDFFLHSAIVTY</sequence>
<dbReference type="EMBL" id="AL163002">
    <property type="protein sequence ID" value="CAB86067.1"/>
    <property type="molecule type" value="Genomic_DNA"/>
</dbReference>
<dbReference type="EMBL" id="CP002688">
    <property type="protein sequence ID" value="AED90544.1"/>
    <property type="molecule type" value="Genomic_DNA"/>
</dbReference>
<dbReference type="PIR" id="T48321">
    <property type="entry name" value="T48321"/>
</dbReference>
<dbReference type="RefSeq" id="NP_195920.1">
    <property type="nucleotide sequence ID" value="NM_120378.1"/>
</dbReference>
<dbReference type="SMR" id="Q9LYY5"/>
<dbReference type="PaxDb" id="3702-AT5G03000.1"/>
<dbReference type="EnsemblPlants" id="AT5G03000.1">
    <property type="protein sequence ID" value="AT5G03000.1"/>
    <property type="gene ID" value="AT5G03000"/>
</dbReference>
<dbReference type="GeneID" id="831712"/>
<dbReference type="Gramene" id="AT5G03000.1">
    <property type="protein sequence ID" value="AT5G03000.1"/>
    <property type="gene ID" value="AT5G03000"/>
</dbReference>
<dbReference type="KEGG" id="ath:AT5G03000"/>
<dbReference type="Araport" id="AT5G03000"/>
<dbReference type="TAIR" id="AT5G03000"/>
<dbReference type="eggNOG" id="KOG1072">
    <property type="taxonomic scope" value="Eukaryota"/>
</dbReference>
<dbReference type="HOGENOM" id="CLU_032521_1_2_1"/>
<dbReference type="InParanoid" id="Q9LYY5"/>
<dbReference type="OMA" id="SPNCEYL"/>
<dbReference type="PhylomeDB" id="Q9LYY5"/>
<dbReference type="PRO" id="PR:Q9LYY5"/>
<dbReference type="Proteomes" id="UP000006548">
    <property type="component" value="Chromosome 5"/>
</dbReference>
<dbReference type="ExpressionAtlas" id="Q9LYY5">
    <property type="expression patterns" value="baseline and differential"/>
</dbReference>
<dbReference type="CDD" id="cd22152">
    <property type="entry name" value="F-box_AtAFR-like"/>
    <property type="match status" value="1"/>
</dbReference>
<dbReference type="Gene3D" id="2.120.10.80">
    <property type="entry name" value="Kelch-type beta propeller"/>
    <property type="match status" value="1"/>
</dbReference>
<dbReference type="InterPro" id="IPR036047">
    <property type="entry name" value="F-box-like_dom_sf"/>
</dbReference>
<dbReference type="InterPro" id="IPR050354">
    <property type="entry name" value="F-box/kelch-repeat_ARATH"/>
</dbReference>
<dbReference type="InterPro" id="IPR001810">
    <property type="entry name" value="F-box_dom"/>
</dbReference>
<dbReference type="InterPro" id="IPR015915">
    <property type="entry name" value="Kelch-typ_b-propeller"/>
</dbReference>
<dbReference type="InterPro" id="IPR006652">
    <property type="entry name" value="Kelch_1"/>
</dbReference>
<dbReference type="PANTHER" id="PTHR24414:SF127">
    <property type="entry name" value="F-BOX ASSOCIATED DOMAIN-CONTAINING PROTEIN"/>
    <property type="match status" value="1"/>
</dbReference>
<dbReference type="PANTHER" id="PTHR24414">
    <property type="entry name" value="F-BOX/KELCH-REPEAT PROTEIN SKIP4"/>
    <property type="match status" value="1"/>
</dbReference>
<dbReference type="Pfam" id="PF00646">
    <property type="entry name" value="F-box"/>
    <property type="match status" value="1"/>
</dbReference>
<dbReference type="Pfam" id="PF25210">
    <property type="entry name" value="Kelch_FKB95"/>
    <property type="match status" value="1"/>
</dbReference>
<dbReference type="SMART" id="SM00256">
    <property type="entry name" value="FBOX"/>
    <property type="match status" value="1"/>
</dbReference>
<dbReference type="SMART" id="SM00612">
    <property type="entry name" value="Kelch"/>
    <property type="match status" value="2"/>
</dbReference>
<dbReference type="SUPFAM" id="SSF81383">
    <property type="entry name" value="F-box domain"/>
    <property type="match status" value="1"/>
</dbReference>
<dbReference type="SUPFAM" id="SSF117281">
    <property type="entry name" value="Kelch motif"/>
    <property type="match status" value="1"/>
</dbReference>
<gene>
    <name type="ordered locus">At5g03000</name>
    <name type="ORF">F15A17.30</name>
</gene>
<keyword id="KW-0880">Kelch repeat</keyword>
<keyword id="KW-1185">Reference proteome</keyword>
<keyword id="KW-0677">Repeat</keyword>
<reference key="1">
    <citation type="journal article" date="2000" name="Nature">
        <title>Sequence and analysis of chromosome 5 of the plant Arabidopsis thaliana.</title>
        <authorList>
            <person name="Tabata S."/>
            <person name="Kaneko T."/>
            <person name="Nakamura Y."/>
            <person name="Kotani H."/>
            <person name="Kato T."/>
            <person name="Asamizu E."/>
            <person name="Miyajima N."/>
            <person name="Sasamoto S."/>
            <person name="Kimura T."/>
            <person name="Hosouchi T."/>
            <person name="Kawashima K."/>
            <person name="Kohara M."/>
            <person name="Matsumoto M."/>
            <person name="Matsuno A."/>
            <person name="Muraki A."/>
            <person name="Nakayama S."/>
            <person name="Nakazaki N."/>
            <person name="Naruo K."/>
            <person name="Okumura S."/>
            <person name="Shinpo S."/>
            <person name="Takeuchi C."/>
            <person name="Wada T."/>
            <person name="Watanabe A."/>
            <person name="Yamada M."/>
            <person name="Yasuda M."/>
            <person name="Sato S."/>
            <person name="de la Bastide M."/>
            <person name="Huang E."/>
            <person name="Spiegel L."/>
            <person name="Gnoj L."/>
            <person name="O'Shaughnessy A."/>
            <person name="Preston R."/>
            <person name="Habermann K."/>
            <person name="Murray J."/>
            <person name="Johnson D."/>
            <person name="Rohlfing T."/>
            <person name="Nelson J."/>
            <person name="Stoneking T."/>
            <person name="Pepin K."/>
            <person name="Spieth J."/>
            <person name="Sekhon M."/>
            <person name="Armstrong J."/>
            <person name="Becker M."/>
            <person name="Belter E."/>
            <person name="Cordum H."/>
            <person name="Cordes M."/>
            <person name="Courtney L."/>
            <person name="Courtney W."/>
            <person name="Dante M."/>
            <person name="Du H."/>
            <person name="Edwards J."/>
            <person name="Fryman J."/>
            <person name="Haakensen B."/>
            <person name="Lamar E."/>
            <person name="Latreille P."/>
            <person name="Leonard S."/>
            <person name="Meyer R."/>
            <person name="Mulvaney E."/>
            <person name="Ozersky P."/>
            <person name="Riley A."/>
            <person name="Strowmatt C."/>
            <person name="Wagner-McPherson C."/>
            <person name="Wollam A."/>
            <person name="Yoakum M."/>
            <person name="Bell M."/>
            <person name="Dedhia N."/>
            <person name="Parnell L."/>
            <person name="Shah R."/>
            <person name="Rodriguez M."/>
            <person name="Hoon See L."/>
            <person name="Vil D."/>
            <person name="Baker J."/>
            <person name="Kirchoff K."/>
            <person name="Toth K."/>
            <person name="King L."/>
            <person name="Bahret A."/>
            <person name="Miller B."/>
            <person name="Marra M.A."/>
            <person name="Martienssen R."/>
            <person name="McCombie W.R."/>
            <person name="Wilson R.K."/>
            <person name="Murphy G."/>
            <person name="Bancroft I."/>
            <person name="Volckaert G."/>
            <person name="Wambutt R."/>
            <person name="Duesterhoeft A."/>
            <person name="Stiekema W."/>
            <person name="Pohl T."/>
            <person name="Entian K.-D."/>
            <person name="Terryn N."/>
            <person name="Hartley N."/>
            <person name="Bent E."/>
            <person name="Johnson S."/>
            <person name="Langham S.-A."/>
            <person name="McCullagh B."/>
            <person name="Robben J."/>
            <person name="Grymonprez B."/>
            <person name="Zimmermann W."/>
            <person name="Ramsperger U."/>
            <person name="Wedler H."/>
            <person name="Balke K."/>
            <person name="Wedler E."/>
            <person name="Peters S."/>
            <person name="van Staveren M."/>
            <person name="Dirkse W."/>
            <person name="Mooijman P."/>
            <person name="Klein Lankhorst R."/>
            <person name="Weitzenegger T."/>
            <person name="Bothe G."/>
            <person name="Rose M."/>
            <person name="Hauf J."/>
            <person name="Berneiser S."/>
            <person name="Hempel S."/>
            <person name="Feldpausch M."/>
            <person name="Lamberth S."/>
            <person name="Villarroel R."/>
            <person name="Gielen J."/>
            <person name="Ardiles W."/>
            <person name="Bents O."/>
            <person name="Lemcke K."/>
            <person name="Kolesov G."/>
            <person name="Mayer K.F.X."/>
            <person name="Rudd S."/>
            <person name="Schoof H."/>
            <person name="Schueller C."/>
            <person name="Zaccaria P."/>
            <person name="Mewes H.-W."/>
            <person name="Bevan M."/>
            <person name="Fransz P.F."/>
        </authorList>
    </citation>
    <scope>NUCLEOTIDE SEQUENCE [LARGE SCALE GENOMIC DNA]</scope>
    <source>
        <strain>cv. Columbia</strain>
    </source>
</reference>
<reference key="2">
    <citation type="journal article" date="2017" name="Plant J.">
        <title>Araport11: a complete reannotation of the Arabidopsis thaliana reference genome.</title>
        <authorList>
            <person name="Cheng C.Y."/>
            <person name="Krishnakumar V."/>
            <person name="Chan A.P."/>
            <person name="Thibaud-Nissen F."/>
            <person name="Schobel S."/>
            <person name="Town C.D."/>
        </authorList>
    </citation>
    <scope>GENOME REANNOTATION</scope>
    <source>
        <strain>cv. Columbia</strain>
    </source>
</reference>
<organism>
    <name type="scientific">Arabidopsis thaliana</name>
    <name type="common">Mouse-ear cress</name>
    <dbReference type="NCBI Taxonomy" id="3702"/>
    <lineage>
        <taxon>Eukaryota</taxon>
        <taxon>Viridiplantae</taxon>
        <taxon>Streptophyta</taxon>
        <taxon>Embryophyta</taxon>
        <taxon>Tracheophyta</taxon>
        <taxon>Spermatophyta</taxon>
        <taxon>Magnoliopsida</taxon>
        <taxon>eudicotyledons</taxon>
        <taxon>Gunneridae</taxon>
        <taxon>Pentapetalae</taxon>
        <taxon>rosids</taxon>
        <taxon>malvids</taxon>
        <taxon>Brassicales</taxon>
        <taxon>Brassicaceae</taxon>
        <taxon>Camelineae</taxon>
        <taxon>Arabidopsis</taxon>
    </lineage>
</organism>
<accession>Q9LYY5</accession>
<proteinExistence type="predicted"/>
<feature type="chain" id="PRO_0000283265" description="Putative F-box/kelch-repeat protein At5g03000">
    <location>
        <begin position="1"/>
        <end position="354"/>
    </location>
</feature>
<feature type="domain" description="F-box">
    <location>
        <begin position="37"/>
        <end position="86"/>
    </location>
</feature>
<feature type="repeat" description="Kelch 1">
    <location>
        <begin position="143"/>
        <end position="189"/>
    </location>
</feature>
<feature type="repeat" description="Kelch 2">
    <location>
        <begin position="190"/>
        <end position="236"/>
    </location>
</feature>